<evidence type="ECO:0000255" key="1">
    <source>
        <dbReference type="HAMAP-Rule" id="MF_00236"/>
    </source>
</evidence>
<evidence type="ECO:0000256" key="2">
    <source>
        <dbReference type="SAM" id="MobiDB-lite"/>
    </source>
</evidence>
<gene>
    <name evidence="1" type="primary">tatA</name>
    <name type="ordered locus">PXO_03840</name>
</gene>
<keyword id="KW-0997">Cell inner membrane</keyword>
<keyword id="KW-1003">Cell membrane</keyword>
<keyword id="KW-0472">Membrane</keyword>
<keyword id="KW-0653">Protein transport</keyword>
<keyword id="KW-0811">Translocation</keyword>
<keyword id="KW-0812">Transmembrane</keyword>
<keyword id="KW-1133">Transmembrane helix</keyword>
<keyword id="KW-0813">Transport</keyword>
<name>TATA_XANOP</name>
<feature type="chain" id="PRO_1000197919" description="Sec-independent protein translocase protein TatA">
    <location>
        <begin position="1"/>
        <end position="75"/>
    </location>
</feature>
<feature type="transmembrane region" description="Helical" evidence="1">
    <location>
        <begin position="1"/>
        <end position="21"/>
    </location>
</feature>
<feature type="region of interest" description="Disordered" evidence="2">
    <location>
        <begin position="41"/>
        <end position="75"/>
    </location>
</feature>
<comment type="function">
    <text evidence="1">Part of the twin-arginine translocation (Tat) system that transports large folded proteins containing a characteristic twin-arginine motif in their signal peptide across membranes. TatA could form the protein-conducting channel of the Tat system.</text>
</comment>
<comment type="subunit">
    <text evidence="1">The Tat system comprises two distinct complexes: a TatABC complex, containing multiple copies of TatA, TatB and TatC subunits, and a separate TatA complex, containing only TatA subunits. Substrates initially bind to the TatABC complex, which probably triggers association of the separate TatA complex to form the active translocon.</text>
</comment>
<comment type="subcellular location">
    <subcellularLocation>
        <location evidence="1">Cell inner membrane</location>
        <topology evidence="1">Single-pass membrane protein</topology>
    </subcellularLocation>
</comment>
<comment type="similarity">
    <text evidence="1">Belongs to the TatA/E family.</text>
</comment>
<protein>
    <recommendedName>
        <fullName evidence="1">Sec-independent protein translocase protein TatA</fullName>
    </recommendedName>
</protein>
<organism>
    <name type="scientific">Xanthomonas oryzae pv. oryzae (strain PXO99A)</name>
    <dbReference type="NCBI Taxonomy" id="360094"/>
    <lineage>
        <taxon>Bacteria</taxon>
        <taxon>Pseudomonadati</taxon>
        <taxon>Pseudomonadota</taxon>
        <taxon>Gammaproteobacteria</taxon>
        <taxon>Lysobacterales</taxon>
        <taxon>Lysobacteraceae</taxon>
        <taxon>Xanthomonas</taxon>
    </lineage>
</organism>
<proteinExistence type="inferred from homology"/>
<accession>B2SIH3</accession>
<sequence length="75" mass="8297">MGGFSIWHWLIVLVIVLLVFGTKRLTSGAKDLGSAVKEFKKGMHDDDKPAGKLGDDSRTAEQAREAQAERDRDAR</sequence>
<dbReference type="EMBL" id="CP000967">
    <property type="protein sequence ID" value="ACD57034.1"/>
    <property type="molecule type" value="Genomic_DNA"/>
</dbReference>
<dbReference type="RefSeq" id="WP_003484969.1">
    <property type="nucleotide sequence ID" value="NC_010717.2"/>
</dbReference>
<dbReference type="SMR" id="B2SIH3"/>
<dbReference type="GeneID" id="97512359"/>
<dbReference type="KEGG" id="xop:PXO_03840"/>
<dbReference type="eggNOG" id="COG1826">
    <property type="taxonomic scope" value="Bacteria"/>
</dbReference>
<dbReference type="HOGENOM" id="CLU_086034_5_3_6"/>
<dbReference type="Proteomes" id="UP000001740">
    <property type="component" value="Chromosome"/>
</dbReference>
<dbReference type="GO" id="GO:0033281">
    <property type="term" value="C:TAT protein transport complex"/>
    <property type="evidence" value="ECO:0007669"/>
    <property type="project" value="UniProtKB-UniRule"/>
</dbReference>
<dbReference type="GO" id="GO:0008320">
    <property type="term" value="F:protein transmembrane transporter activity"/>
    <property type="evidence" value="ECO:0007669"/>
    <property type="project" value="UniProtKB-UniRule"/>
</dbReference>
<dbReference type="GO" id="GO:0043953">
    <property type="term" value="P:protein transport by the Tat complex"/>
    <property type="evidence" value="ECO:0007669"/>
    <property type="project" value="UniProtKB-UniRule"/>
</dbReference>
<dbReference type="Gene3D" id="1.20.5.3310">
    <property type="match status" value="1"/>
</dbReference>
<dbReference type="HAMAP" id="MF_00236">
    <property type="entry name" value="TatA_E"/>
    <property type="match status" value="1"/>
</dbReference>
<dbReference type="InterPro" id="IPR003369">
    <property type="entry name" value="TatA/B/E"/>
</dbReference>
<dbReference type="InterPro" id="IPR006312">
    <property type="entry name" value="TatA/E"/>
</dbReference>
<dbReference type="NCBIfam" id="NF002813">
    <property type="entry name" value="PRK02958.1"/>
    <property type="match status" value="1"/>
</dbReference>
<dbReference type="NCBIfam" id="NF003393">
    <property type="entry name" value="PRK04561.1"/>
    <property type="match status" value="1"/>
</dbReference>
<dbReference type="NCBIfam" id="TIGR01411">
    <property type="entry name" value="tatAE"/>
    <property type="match status" value="1"/>
</dbReference>
<dbReference type="PANTHER" id="PTHR42982">
    <property type="entry name" value="SEC-INDEPENDENT PROTEIN TRANSLOCASE PROTEIN TATA"/>
    <property type="match status" value="1"/>
</dbReference>
<dbReference type="PANTHER" id="PTHR42982:SF1">
    <property type="entry name" value="SEC-INDEPENDENT PROTEIN TRANSLOCASE PROTEIN TATA"/>
    <property type="match status" value="1"/>
</dbReference>
<dbReference type="Pfam" id="PF02416">
    <property type="entry name" value="TatA_B_E"/>
    <property type="match status" value="1"/>
</dbReference>
<reference key="1">
    <citation type="journal article" date="2008" name="BMC Genomics">
        <title>Genome sequence and rapid evolution of the rice pathogen Xanthomonas oryzae pv. oryzae PXO99A.</title>
        <authorList>
            <person name="Salzberg S.L."/>
            <person name="Sommer D.D."/>
            <person name="Schatz M.C."/>
            <person name="Phillippy A.M."/>
            <person name="Rabinowicz P.D."/>
            <person name="Tsuge S."/>
            <person name="Furutani A."/>
            <person name="Ochiai H."/>
            <person name="Delcher A.L."/>
            <person name="Kelley D."/>
            <person name="Madupu R."/>
            <person name="Puiu D."/>
            <person name="Radune D."/>
            <person name="Shumway M."/>
            <person name="Trapnell C."/>
            <person name="Aparna G."/>
            <person name="Jha G."/>
            <person name="Pandey A."/>
            <person name="Patil P.B."/>
            <person name="Ishihara H."/>
            <person name="Meyer D.F."/>
            <person name="Szurek B."/>
            <person name="Verdier V."/>
            <person name="Koebnik R."/>
            <person name="Dow J.M."/>
            <person name="Ryan R.P."/>
            <person name="Hirata H."/>
            <person name="Tsuyumu S."/>
            <person name="Won Lee S."/>
            <person name="Seo Y.-S."/>
            <person name="Sriariyanum M."/>
            <person name="Ronald P.C."/>
            <person name="Sonti R.V."/>
            <person name="Van Sluys M.-A."/>
            <person name="Leach J.E."/>
            <person name="White F.F."/>
            <person name="Bogdanove A.J."/>
        </authorList>
    </citation>
    <scope>NUCLEOTIDE SEQUENCE [LARGE SCALE GENOMIC DNA]</scope>
    <source>
        <strain>PXO99A</strain>
    </source>
</reference>